<reference key="1">
    <citation type="journal article" date="2003" name="J. Bacteriol.">
        <title>Complete genome sequence of the oral pathogenic bacterium Porphyromonas gingivalis strain W83.</title>
        <authorList>
            <person name="Nelson K.E."/>
            <person name="Fleischmann R.D."/>
            <person name="DeBoy R.T."/>
            <person name="Paulsen I.T."/>
            <person name="Fouts D.E."/>
            <person name="Eisen J.A."/>
            <person name="Daugherty S.C."/>
            <person name="Dodson R.J."/>
            <person name="Durkin A.S."/>
            <person name="Gwinn M.L."/>
            <person name="Haft D.H."/>
            <person name="Kolonay J.F."/>
            <person name="Nelson W.C."/>
            <person name="Mason T.M."/>
            <person name="Tallon L."/>
            <person name="Gray J."/>
            <person name="Granger D."/>
            <person name="Tettelin H."/>
            <person name="Dong H."/>
            <person name="Galvin J.L."/>
            <person name="Duncan M.J."/>
            <person name="Dewhirst F.E."/>
            <person name="Fraser C.M."/>
        </authorList>
    </citation>
    <scope>NUCLEOTIDE SEQUENCE [LARGE SCALE GENOMIC DNA]</scope>
    <source>
        <strain>ATCC BAA-308 / W83</strain>
    </source>
</reference>
<protein>
    <recommendedName>
        <fullName evidence="1">CTP synthase</fullName>
        <ecNumber evidence="1">6.3.4.2</ecNumber>
    </recommendedName>
    <alternativeName>
        <fullName evidence="1">Cytidine 5'-triphosphate synthase</fullName>
    </alternativeName>
    <alternativeName>
        <fullName evidence="1">Cytidine triphosphate synthetase</fullName>
        <shortName evidence="1">CTP synthetase</shortName>
        <shortName evidence="1">CTPS</shortName>
    </alternativeName>
    <alternativeName>
        <fullName evidence="1">UTP--ammonia ligase</fullName>
    </alternativeName>
</protein>
<keyword id="KW-0067">ATP-binding</keyword>
<keyword id="KW-0315">Glutamine amidotransferase</keyword>
<keyword id="KW-0436">Ligase</keyword>
<keyword id="KW-0460">Magnesium</keyword>
<keyword id="KW-0479">Metal-binding</keyword>
<keyword id="KW-0547">Nucleotide-binding</keyword>
<keyword id="KW-0665">Pyrimidine biosynthesis</keyword>
<keyword id="KW-1185">Reference proteome</keyword>
<name>PYRG_PORGI</name>
<dbReference type="EC" id="6.3.4.2" evidence="1"/>
<dbReference type="EMBL" id="AE015924">
    <property type="protein sequence ID" value="AAQ65719.1"/>
    <property type="molecule type" value="Genomic_DNA"/>
</dbReference>
<dbReference type="RefSeq" id="WP_010956056.1">
    <property type="nucleotide sequence ID" value="NC_002950.2"/>
</dbReference>
<dbReference type="SMR" id="Q7MWR7"/>
<dbReference type="STRING" id="242619.PG_0525"/>
<dbReference type="EnsemblBacteria" id="AAQ65719">
    <property type="protein sequence ID" value="AAQ65719"/>
    <property type="gene ID" value="PG_0525"/>
</dbReference>
<dbReference type="KEGG" id="pgi:PG_0525"/>
<dbReference type="eggNOG" id="COG0504">
    <property type="taxonomic scope" value="Bacteria"/>
</dbReference>
<dbReference type="HOGENOM" id="CLU_011675_5_0_10"/>
<dbReference type="UniPathway" id="UPA00159">
    <property type="reaction ID" value="UER00277"/>
</dbReference>
<dbReference type="Proteomes" id="UP000000588">
    <property type="component" value="Chromosome"/>
</dbReference>
<dbReference type="GO" id="GO:0005829">
    <property type="term" value="C:cytosol"/>
    <property type="evidence" value="ECO:0007669"/>
    <property type="project" value="TreeGrafter"/>
</dbReference>
<dbReference type="GO" id="GO:0005524">
    <property type="term" value="F:ATP binding"/>
    <property type="evidence" value="ECO:0007669"/>
    <property type="project" value="UniProtKB-KW"/>
</dbReference>
<dbReference type="GO" id="GO:0003883">
    <property type="term" value="F:CTP synthase activity"/>
    <property type="evidence" value="ECO:0007669"/>
    <property type="project" value="UniProtKB-UniRule"/>
</dbReference>
<dbReference type="GO" id="GO:0004359">
    <property type="term" value="F:glutaminase activity"/>
    <property type="evidence" value="ECO:0007669"/>
    <property type="project" value="RHEA"/>
</dbReference>
<dbReference type="GO" id="GO:0042802">
    <property type="term" value="F:identical protein binding"/>
    <property type="evidence" value="ECO:0007669"/>
    <property type="project" value="TreeGrafter"/>
</dbReference>
<dbReference type="GO" id="GO:0046872">
    <property type="term" value="F:metal ion binding"/>
    <property type="evidence" value="ECO:0007669"/>
    <property type="project" value="UniProtKB-KW"/>
</dbReference>
<dbReference type="GO" id="GO:0044210">
    <property type="term" value="P:'de novo' CTP biosynthetic process"/>
    <property type="evidence" value="ECO:0007669"/>
    <property type="project" value="UniProtKB-UniRule"/>
</dbReference>
<dbReference type="GO" id="GO:0019856">
    <property type="term" value="P:pyrimidine nucleobase biosynthetic process"/>
    <property type="evidence" value="ECO:0007669"/>
    <property type="project" value="TreeGrafter"/>
</dbReference>
<dbReference type="CDD" id="cd03113">
    <property type="entry name" value="CTPS_N"/>
    <property type="match status" value="1"/>
</dbReference>
<dbReference type="CDD" id="cd01746">
    <property type="entry name" value="GATase1_CTP_Synthase"/>
    <property type="match status" value="1"/>
</dbReference>
<dbReference type="FunFam" id="3.40.50.300:FF:000009">
    <property type="entry name" value="CTP synthase"/>
    <property type="match status" value="1"/>
</dbReference>
<dbReference type="FunFam" id="3.40.50.880:FF:000002">
    <property type="entry name" value="CTP synthase"/>
    <property type="match status" value="1"/>
</dbReference>
<dbReference type="Gene3D" id="3.40.50.880">
    <property type="match status" value="1"/>
</dbReference>
<dbReference type="Gene3D" id="3.40.50.300">
    <property type="entry name" value="P-loop containing nucleotide triphosphate hydrolases"/>
    <property type="match status" value="1"/>
</dbReference>
<dbReference type="HAMAP" id="MF_01227">
    <property type="entry name" value="PyrG"/>
    <property type="match status" value="1"/>
</dbReference>
<dbReference type="InterPro" id="IPR029062">
    <property type="entry name" value="Class_I_gatase-like"/>
</dbReference>
<dbReference type="InterPro" id="IPR004468">
    <property type="entry name" value="CTP_synthase"/>
</dbReference>
<dbReference type="InterPro" id="IPR017456">
    <property type="entry name" value="CTP_synthase_N"/>
</dbReference>
<dbReference type="InterPro" id="IPR017926">
    <property type="entry name" value="GATASE"/>
</dbReference>
<dbReference type="InterPro" id="IPR033828">
    <property type="entry name" value="GATase1_CTP_Synthase"/>
</dbReference>
<dbReference type="InterPro" id="IPR027417">
    <property type="entry name" value="P-loop_NTPase"/>
</dbReference>
<dbReference type="NCBIfam" id="NF003792">
    <property type="entry name" value="PRK05380.1"/>
    <property type="match status" value="1"/>
</dbReference>
<dbReference type="NCBIfam" id="TIGR00337">
    <property type="entry name" value="PyrG"/>
    <property type="match status" value="1"/>
</dbReference>
<dbReference type="PANTHER" id="PTHR11550">
    <property type="entry name" value="CTP SYNTHASE"/>
    <property type="match status" value="1"/>
</dbReference>
<dbReference type="PANTHER" id="PTHR11550:SF0">
    <property type="entry name" value="CTP SYNTHASE-RELATED"/>
    <property type="match status" value="1"/>
</dbReference>
<dbReference type="Pfam" id="PF06418">
    <property type="entry name" value="CTP_synth_N"/>
    <property type="match status" value="1"/>
</dbReference>
<dbReference type="Pfam" id="PF00117">
    <property type="entry name" value="GATase"/>
    <property type="match status" value="1"/>
</dbReference>
<dbReference type="SUPFAM" id="SSF52317">
    <property type="entry name" value="Class I glutamine amidotransferase-like"/>
    <property type="match status" value="1"/>
</dbReference>
<dbReference type="SUPFAM" id="SSF52540">
    <property type="entry name" value="P-loop containing nucleoside triphosphate hydrolases"/>
    <property type="match status" value="1"/>
</dbReference>
<dbReference type="PROSITE" id="PS51273">
    <property type="entry name" value="GATASE_TYPE_1"/>
    <property type="match status" value="1"/>
</dbReference>
<accession>Q7MWR7</accession>
<proteinExistence type="inferred from homology"/>
<feature type="chain" id="PRO_0000266175" description="CTP synthase">
    <location>
        <begin position="1"/>
        <end position="539"/>
    </location>
</feature>
<feature type="domain" description="Glutamine amidotransferase type-1" evidence="1">
    <location>
        <begin position="294"/>
        <end position="536"/>
    </location>
</feature>
<feature type="region of interest" description="Amidoligase domain" evidence="1">
    <location>
        <begin position="1"/>
        <end position="268"/>
    </location>
</feature>
<feature type="active site" description="Nucleophile; for glutamine hydrolysis" evidence="1">
    <location>
        <position position="383"/>
    </location>
</feature>
<feature type="active site" evidence="1">
    <location>
        <position position="509"/>
    </location>
</feature>
<feature type="active site" evidence="1">
    <location>
        <position position="511"/>
    </location>
</feature>
<feature type="binding site" evidence="1">
    <location>
        <position position="15"/>
    </location>
    <ligand>
        <name>CTP</name>
        <dbReference type="ChEBI" id="CHEBI:37563"/>
        <note>allosteric inhibitor</note>
    </ligand>
</feature>
<feature type="binding site" evidence="1">
    <location>
        <position position="15"/>
    </location>
    <ligand>
        <name>UTP</name>
        <dbReference type="ChEBI" id="CHEBI:46398"/>
    </ligand>
</feature>
<feature type="binding site" evidence="1">
    <location>
        <begin position="16"/>
        <end position="21"/>
    </location>
    <ligand>
        <name>ATP</name>
        <dbReference type="ChEBI" id="CHEBI:30616"/>
    </ligand>
</feature>
<feature type="binding site" evidence="1">
    <location>
        <position position="56"/>
    </location>
    <ligand>
        <name>L-glutamine</name>
        <dbReference type="ChEBI" id="CHEBI:58359"/>
    </ligand>
</feature>
<feature type="binding site" evidence="1">
    <location>
        <position position="73"/>
    </location>
    <ligand>
        <name>ATP</name>
        <dbReference type="ChEBI" id="CHEBI:30616"/>
    </ligand>
</feature>
<feature type="binding site" evidence="1">
    <location>
        <position position="73"/>
    </location>
    <ligand>
        <name>Mg(2+)</name>
        <dbReference type="ChEBI" id="CHEBI:18420"/>
    </ligand>
</feature>
<feature type="binding site" evidence="1">
    <location>
        <position position="143"/>
    </location>
    <ligand>
        <name>Mg(2+)</name>
        <dbReference type="ChEBI" id="CHEBI:18420"/>
    </ligand>
</feature>
<feature type="binding site" evidence="1">
    <location>
        <begin position="150"/>
        <end position="152"/>
    </location>
    <ligand>
        <name>CTP</name>
        <dbReference type="ChEBI" id="CHEBI:37563"/>
        <note>allosteric inhibitor</note>
    </ligand>
</feature>
<feature type="binding site" evidence="1">
    <location>
        <begin position="189"/>
        <end position="194"/>
    </location>
    <ligand>
        <name>CTP</name>
        <dbReference type="ChEBI" id="CHEBI:37563"/>
        <note>allosteric inhibitor</note>
    </ligand>
</feature>
<feature type="binding site" evidence="1">
    <location>
        <begin position="189"/>
        <end position="194"/>
    </location>
    <ligand>
        <name>UTP</name>
        <dbReference type="ChEBI" id="CHEBI:46398"/>
    </ligand>
</feature>
<feature type="binding site" evidence="1">
    <location>
        <position position="225"/>
    </location>
    <ligand>
        <name>CTP</name>
        <dbReference type="ChEBI" id="CHEBI:37563"/>
        <note>allosteric inhibitor</note>
    </ligand>
</feature>
<feature type="binding site" evidence="1">
    <location>
        <position position="225"/>
    </location>
    <ligand>
        <name>UTP</name>
        <dbReference type="ChEBI" id="CHEBI:46398"/>
    </ligand>
</feature>
<feature type="binding site" evidence="1">
    <location>
        <position position="356"/>
    </location>
    <ligand>
        <name>L-glutamine</name>
        <dbReference type="ChEBI" id="CHEBI:58359"/>
    </ligand>
</feature>
<feature type="binding site" evidence="1">
    <location>
        <begin position="384"/>
        <end position="387"/>
    </location>
    <ligand>
        <name>L-glutamine</name>
        <dbReference type="ChEBI" id="CHEBI:58359"/>
    </ligand>
</feature>
<feature type="binding site" evidence="1">
    <location>
        <position position="407"/>
    </location>
    <ligand>
        <name>L-glutamine</name>
        <dbReference type="ChEBI" id="CHEBI:58359"/>
    </ligand>
</feature>
<feature type="binding site" evidence="1">
    <location>
        <position position="464"/>
    </location>
    <ligand>
        <name>L-glutamine</name>
        <dbReference type="ChEBI" id="CHEBI:58359"/>
    </ligand>
</feature>
<evidence type="ECO:0000255" key="1">
    <source>
        <dbReference type="HAMAP-Rule" id="MF_01227"/>
    </source>
</evidence>
<organism>
    <name type="scientific">Porphyromonas gingivalis (strain ATCC BAA-308 / W83)</name>
    <dbReference type="NCBI Taxonomy" id="242619"/>
    <lineage>
        <taxon>Bacteria</taxon>
        <taxon>Pseudomonadati</taxon>
        <taxon>Bacteroidota</taxon>
        <taxon>Bacteroidia</taxon>
        <taxon>Bacteroidales</taxon>
        <taxon>Porphyromonadaceae</taxon>
        <taxon>Porphyromonas</taxon>
    </lineage>
</organism>
<sequence length="539" mass="60518">MADTKYIFVTGGVVSSLGKGIVAASLGKLLQARGFNVALQKFDPYINIDPGTLNPYEHGECYVTEDGHEADLDLGHYERFLNTPTTRANNITTGRIYQNVIRKERKGEYLGKTVQVVPHITDEIKRNVKLLGQKSQYDFVITEIGGTVGDIESLPFLESVRQLKWELGQNCLCVHLTYVPYIAAAGEVKTKPTQHSVKQLQEVGIQPDILVLRTEHELQPDILKKVALFCNVAPDSVVQSVDVPTIYEVPLVLQQQHMDETVLRKVGLQVGPVPEMRQWHEFLEMKHTARETVTIALVGKYVELQDAYKSIDESLMQAAIYNRKKLNLISVHSEKVTEANVAETLKDMDGIVIAPGFGSRGVEGKLIALKYARENDLPTLGICLGMQCMVIEYARNVLGFKDANTTEIESNIEHKVIDLMDEQKTVTDMGGSMRLGAYDCALRKGSKLAAAYGKEFVRERHRHRFEFNSQYREAFEKAGMQCVGENPETGLVEAVEVPACRWFVGVQFHPEYNSTVVNPNPLFMAFIREAIKTRKKDKE</sequence>
<comment type="function">
    <text evidence="1">Catalyzes the ATP-dependent amination of UTP to CTP with either L-glutamine or ammonia as the source of nitrogen. Regulates intracellular CTP levels through interactions with the four ribonucleotide triphosphates.</text>
</comment>
<comment type="catalytic activity">
    <reaction evidence="1">
        <text>UTP + L-glutamine + ATP + H2O = CTP + L-glutamate + ADP + phosphate + 2 H(+)</text>
        <dbReference type="Rhea" id="RHEA:26426"/>
        <dbReference type="ChEBI" id="CHEBI:15377"/>
        <dbReference type="ChEBI" id="CHEBI:15378"/>
        <dbReference type="ChEBI" id="CHEBI:29985"/>
        <dbReference type="ChEBI" id="CHEBI:30616"/>
        <dbReference type="ChEBI" id="CHEBI:37563"/>
        <dbReference type="ChEBI" id="CHEBI:43474"/>
        <dbReference type="ChEBI" id="CHEBI:46398"/>
        <dbReference type="ChEBI" id="CHEBI:58359"/>
        <dbReference type="ChEBI" id="CHEBI:456216"/>
        <dbReference type="EC" id="6.3.4.2"/>
    </reaction>
</comment>
<comment type="catalytic activity">
    <reaction evidence="1">
        <text>L-glutamine + H2O = L-glutamate + NH4(+)</text>
        <dbReference type="Rhea" id="RHEA:15889"/>
        <dbReference type="ChEBI" id="CHEBI:15377"/>
        <dbReference type="ChEBI" id="CHEBI:28938"/>
        <dbReference type="ChEBI" id="CHEBI:29985"/>
        <dbReference type="ChEBI" id="CHEBI:58359"/>
    </reaction>
</comment>
<comment type="catalytic activity">
    <reaction evidence="1">
        <text>UTP + NH4(+) + ATP = CTP + ADP + phosphate + 2 H(+)</text>
        <dbReference type="Rhea" id="RHEA:16597"/>
        <dbReference type="ChEBI" id="CHEBI:15378"/>
        <dbReference type="ChEBI" id="CHEBI:28938"/>
        <dbReference type="ChEBI" id="CHEBI:30616"/>
        <dbReference type="ChEBI" id="CHEBI:37563"/>
        <dbReference type="ChEBI" id="CHEBI:43474"/>
        <dbReference type="ChEBI" id="CHEBI:46398"/>
        <dbReference type="ChEBI" id="CHEBI:456216"/>
    </reaction>
</comment>
<comment type="activity regulation">
    <text evidence="1">Allosterically activated by GTP, when glutamine is the substrate; GTP has no effect on the reaction when ammonia is the substrate. The allosteric effector GTP functions by stabilizing the protein conformation that binds the tetrahedral intermediate(s) formed during glutamine hydrolysis. Inhibited by the product CTP, via allosteric rather than competitive inhibition.</text>
</comment>
<comment type="pathway">
    <text evidence="1">Pyrimidine metabolism; CTP biosynthesis via de novo pathway; CTP from UDP: step 2/2.</text>
</comment>
<comment type="subunit">
    <text evidence="1">Homotetramer.</text>
</comment>
<comment type="miscellaneous">
    <text evidence="1">CTPSs have evolved a hybrid strategy for distinguishing between UTP and CTP. The overlapping regions of the product feedback inhibitory and substrate sites recognize a common feature in both compounds, the triphosphate moiety. To differentiate isosteric substrate and product pyrimidine rings, an additional pocket far from the expected kinase/ligase catalytic site, specifically recognizes the cytosine and ribose portions of the product inhibitor.</text>
</comment>
<comment type="similarity">
    <text evidence="1">Belongs to the CTP synthase family.</text>
</comment>
<gene>
    <name evidence="1" type="primary">pyrG</name>
    <name type="ordered locus">PG_0525</name>
</gene>